<organism>
    <name type="scientific">Lactobacillus acidophilus (strain ATCC 700396 / NCK56 / N2 / NCFM)</name>
    <dbReference type="NCBI Taxonomy" id="272621"/>
    <lineage>
        <taxon>Bacteria</taxon>
        <taxon>Bacillati</taxon>
        <taxon>Bacillota</taxon>
        <taxon>Bacilli</taxon>
        <taxon>Lactobacillales</taxon>
        <taxon>Lactobacillaceae</taxon>
        <taxon>Lactobacillus</taxon>
    </lineage>
</organism>
<gene>
    <name evidence="1" type="primary">rplR</name>
    <name type="ordered locus">LBA0306</name>
</gene>
<accession>Q5FM75</accession>
<sequence length="118" mass="12897">MISKPDKNKLRLKRHRRIRGKISGTAERPRLSIFRSNKNIYAQLIDDVAGVTLASASTLDENVSDATKLEQAAAVGKAIAEAAKAKNISTVVFDRSGYLYHGRIQALADAARENGLDF</sequence>
<evidence type="ECO:0000255" key="1">
    <source>
        <dbReference type="HAMAP-Rule" id="MF_01337"/>
    </source>
</evidence>
<evidence type="ECO:0000305" key="2"/>
<comment type="function">
    <text evidence="1">This is one of the proteins that bind and probably mediate the attachment of the 5S RNA into the large ribosomal subunit, where it forms part of the central protuberance.</text>
</comment>
<comment type="subunit">
    <text evidence="1">Part of the 50S ribosomal subunit; part of the 5S rRNA/L5/L18/L25 subcomplex. Contacts the 5S and 23S rRNAs.</text>
</comment>
<comment type="similarity">
    <text evidence="1">Belongs to the universal ribosomal protein uL18 family.</text>
</comment>
<keyword id="KW-1185">Reference proteome</keyword>
<keyword id="KW-0687">Ribonucleoprotein</keyword>
<keyword id="KW-0689">Ribosomal protein</keyword>
<keyword id="KW-0694">RNA-binding</keyword>
<keyword id="KW-0699">rRNA-binding</keyword>
<reference key="1">
    <citation type="journal article" date="2005" name="Proc. Natl. Acad. Sci. U.S.A.">
        <title>Complete genome sequence of the probiotic lactic acid bacterium Lactobacillus acidophilus NCFM.</title>
        <authorList>
            <person name="Altermann E."/>
            <person name="Russell W.M."/>
            <person name="Azcarate-Peril M.A."/>
            <person name="Barrangou R."/>
            <person name="Buck B.L."/>
            <person name="McAuliffe O."/>
            <person name="Souther N."/>
            <person name="Dobson A."/>
            <person name="Duong T."/>
            <person name="Callanan M."/>
            <person name="Lick S."/>
            <person name="Hamrick A."/>
            <person name="Cano R."/>
            <person name="Klaenhammer T.R."/>
        </authorList>
    </citation>
    <scope>NUCLEOTIDE SEQUENCE [LARGE SCALE GENOMIC DNA]</scope>
    <source>
        <strain>ATCC 700396 / NCK56 / N2 / NCFM</strain>
    </source>
</reference>
<dbReference type="EMBL" id="CP000033">
    <property type="protein sequence ID" value="AAV42199.1"/>
    <property type="molecule type" value="Genomic_DNA"/>
</dbReference>
<dbReference type="RefSeq" id="WP_003549040.1">
    <property type="nucleotide sequence ID" value="NC_006814.3"/>
</dbReference>
<dbReference type="RefSeq" id="YP_193230.1">
    <property type="nucleotide sequence ID" value="NC_006814.3"/>
</dbReference>
<dbReference type="SMR" id="Q5FM75"/>
<dbReference type="STRING" id="272621.LBA0306"/>
<dbReference type="GeneID" id="93290585"/>
<dbReference type="KEGG" id="lac:LBA0306"/>
<dbReference type="PATRIC" id="fig|272621.13.peg.293"/>
<dbReference type="eggNOG" id="COG0256">
    <property type="taxonomic scope" value="Bacteria"/>
</dbReference>
<dbReference type="HOGENOM" id="CLU_098841_0_1_9"/>
<dbReference type="OrthoDB" id="9810939at2"/>
<dbReference type="BioCyc" id="LACI272621:G1G49-301-MONOMER"/>
<dbReference type="Proteomes" id="UP000006381">
    <property type="component" value="Chromosome"/>
</dbReference>
<dbReference type="GO" id="GO:0022625">
    <property type="term" value="C:cytosolic large ribosomal subunit"/>
    <property type="evidence" value="ECO:0007669"/>
    <property type="project" value="TreeGrafter"/>
</dbReference>
<dbReference type="GO" id="GO:0008097">
    <property type="term" value="F:5S rRNA binding"/>
    <property type="evidence" value="ECO:0007669"/>
    <property type="project" value="TreeGrafter"/>
</dbReference>
<dbReference type="GO" id="GO:0003735">
    <property type="term" value="F:structural constituent of ribosome"/>
    <property type="evidence" value="ECO:0007669"/>
    <property type="project" value="InterPro"/>
</dbReference>
<dbReference type="GO" id="GO:0006412">
    <property type="term" value="P:translation"/>
    <property type="evidence" value="ECO:0007669"/>
    <property type="project" value="UniProtKB-UniRule"/>
</dbReference>
<dbReference type="CDD" id="cd00432">
    <property type="entry name" value="Ribosomal_L18_L5e"/>
    <property type="match status" value="1"/>
</dbReference>
<dbReference type="FunFam" id="3.30.420.100:FF:000001">
    <property type="entry name" value="50S ribosomal protein L18"/>
    <property type="match status" value="1"/>
</dbReference>
<dbReference type="Gene3D" id="3.30.420.100">
    <property type="match status" value="1"/>
</dbReference>
<dbReference type="HAMAP" id="MF_01337_B">
    <property type="entry name" value="Ribosomal_uL18_B"/>
    <property type="match status" value="1"/>
</dbReference>
<dbReference type="InterPro" id="IPR004389">
    <property type="entry name" value="Ribosomal_uL18_bac-type"/>
</dbReference>
<dbReference type="InterPro" id="IPR005484">
    <property type="entry name" value="Ribosomal_uL18_bac/euk"/>
</dbReference>
<dbReference type="NCBIfam" id="TIGR00060">
    <property type="entry name" value="L18_bact"/>
    <property type="match status" value="1"/>
</dbReference>
<dbReference type="PANTHER" id="PTHR12899">
    <property type="entry name" value="39S RIBOSOMAL PROTEIN L18, MITOCHONDRIAL"/>
    <property type="match status" value="1"/>
</dbReference>
<dbReference type="PANTHER" id="PTHR12899:SF3">
    <property type="entry name" value="LARGE RIBOSOMAL SUBUNIT PROTEIN UL18M"/>
    <property type="match status" value="1"/>
</dbReference>
<dbReference type="Pfam" id="PF00861">
    <property type="entry name" value="Ribosomal_L18p"/>
    <property type="match status" value="1"/>
</dbReference>
<dbReference type="SUPFAM" id="SSF53137">
    <property type="entry name" value="Translational machinery components"/>
    <property type="match status" value="1"/>
</dbReference>
<name>RL18_LACAC</name>
<feature type="chain" id="PRO_0000131277" description="Large ribosomal subunit protein uL18">
    <location>
        <begin position="1"/>
        <end position="118"/>
    </location>
</feature>
<protein>
    <recommendedName>
        <fullName evidence="1">Large ribosomal subunit protein uL18</fullName>
    </recommendedName>
    <alternativeName>
        <fullName evidence="2">50S ribosomal protein L18</fullName>
    </alternativeName>
</protein>
<proteinExistence type="inferred from homology"/>